<dbReference type="EC" id="3.1.26.3" evidence="1"/>
<dbReference type="EMBL" id="BX936398">
    <property type="protein sequence ID" value="CAH22128.1"/>
    <property type="molecule type" value="Genomic_DNA"/>
</dbReference>
<dbReference type="RefSeq" id="WP_002209679.1">
    <property type="nucleotide sequence ID" value="NZ_CP009712.1"/>
</dbReference>
<dbReference type="SMR" id="Q667V1"/>
<dbReference type="GeneID" id="57975973"/>
<dbReference type="KEGG" id="ypo:BZ17_3741"/>
<dbReference type="KEGG" id="yps:YPTB2890"/>
<dbReference type="PATRIC" id="fig|273123.14.peg.3923"/>
<dbReference type="Proteomes" id="UP000001011">
    <property type="component" value="Chromosome"/>
</dbReference>
<dbReference type="GO" id="GO:0005737">
    <property type="term" value="C:cytoplasm"/>
    <property type="evidence" value="ECO:0007669"/>
    <property type="project" value="UniProtKB-SubCell"/>
</dbReference>
<dbReference type="GO" id="GO:0003725">
    <property type="term" value="F:double-stranded RNA binding"/>
    <property type="evidence" value="ECO:0007669"/>
    <property type="project" value="TreeGrafter"/>
</dbReference>
<dbReference type="GO" id="GO:0046872">
    <property type="term" value="F:metal ion binding"/>
    <property type="evidence" value="ECO:0007669"/>
    <property type="project" value="UniProtKB-KW"/>
</dbReference>
<dbReference type="GO" id="GO:0004525">
    <property type="term" value="F:ribonuclease III activity"/>
    <property type="evidence" value="ECO:0007669"/>
    <property type="project" value="UniProtKB-UniRule"/>
</dbReference>
<dbReference type="GO" id="GO:0019843">
    <property type="term" value="F:rRNA binding"/>
    <property type="evidence" value="ECO:0007669"/>
    <property type="project" value="UniProtKB-KW"/>
</dbReference>
<dbReference type="GO" id="GO:0006397">
    <property type="term" value="P:mRNA processing"/>
    <property type="evidence" value="ECO:0007669"/>
    <property type="project" value="UniProtKB-UniRule"/>
</dbReference>
<dbReference type="GO" id="GO:0010468">
    <property type="term" value="P:regulation of gene expression"/>
    <property type="evidence" value="ECO:0007669"/>
    <property type="project" value="TreeGrafter"/>
</dbReference>
<dbReference type="GO" id="GO:0006364">
    <property type="term" value="P:rRNA processing"/>
    <property type="evidence" value="ECO:0007669"/>
    <property type="project" value="UniProtKB-UniRule"/>
</dbReference>
<dbReference type="GO" id="GO:0008033">
    <property type="term" value="P:tRNA processing"/>
    <property type="evidence" value="ECO:0007669"/>
    <property type="project" value="UniProtKB-KW"/>
</dbReference>
<dbReference type="CDD" id="cd10845">
    <property type="entry name" value="DSRM_RNAse_III_family"/>
    <property type="match status" value="1"/>
</dbReference>
<dbReference type="CDD" id="cd00593">
    <property type="entry name" value="RIBOc"/>
    <property type="match status" value="1"/>
</dbReference>
<dbReference type="FunFam" id="1.10.1520.10:FF:000001">
    <property type="entry name" value="Ribonuclease 3"/>
    <property type="match status" value="1"/>
</dbReference>
<dbReference type="FunFam" id="3.30.160.20:FF:000003">
    <property type="entry name" value="Ribonuclease 3"/>
    <property type="match status" value="1"/>
</dbReference>
<dbReference type="Gene3D" id="3.30.160.20">
    <property type="match status" value="1"/>
</dbReference>
<dbReference type="Gene3D" id="1.10.1520.10">
    <property type="entry name" value="Ribonuclease III domain"/>
    <property type="match status" value="1"/>
</dbReference>
<dbReference type="HAMAP" id="MF_00104">
    <property type="entry name" value="RNase_III"/>
    <property type="match status" value="1"/>
</dbReference>
<dbReference type="InterPro" id="IPR014720">
    <property type="entry name" value="dsRBD_dom"/>
</dbReference>
<dbReference type="InterPro" id="IPR011907">
    <property type="entry name" value="RNase_III"/>
</dbReference>
<dbReference type="InterPro" id="IPR000999">
    <property type="entry name" value="RNase_III_dom"/>
</dbReference>
<dbReference type="InterPro" id="IPR036389">
    <property type="entry name" value="RNase_III_sf"/>
</dbReference>
<dbReference type="NCBIfam" id="TIGR02191">
    <property type="entry name" value="RNaseIII"/>
    <property type="match status" value="1"/>
</dbReference>
<dbReference type="PANTHER" id="PTHR11207:SF0">
    <property type="entry name" value="RIBONUCLEASE 3"/>
    <property type="match status" value="1"/>
</dbReference>
<dbReference type="PANTHER" id="PTHR11207">
    <property type="entry name" value="RIBONUCLEASE III"/>
    <property type="match status" value="1"/>
</dbReference>
<dbReference type="Pfam" id="PF00035">
    <property type="entry name" value="dsrm"/>
    <property type="match status" value="1"/>
</dbReference>
<dbReference type="Pfam" id="PF14622">
    <property type="entry name" value="Ribonucleas_3_3"/>
    <property type="match status" value="1"/>
</dbReference>
<dbReference type="SMART" id="SM00358">
    <property type="entry name" value="DSRM"/>
    <property type="match status" value="1"/>
</dbReference>
<dbReference type="SMART" id="SM00535">
    <property type="entry name" value="RIBOc"/>
    <property type="match status" value="1"/>
</dbReference>
<dbReference type="SUPFAM" id="SSF54768">
    <property type="entry name" value="dsRNA-binding domain-like"/>
    <property type="match status" value="1"/>
</dbReference>
<dbReference type="SUPFAM" id="SSF69065">
    <property type="entry name" value="RNase III domain-like"/>
    <property type="match status" value="1"/>
</dbReference>
<dbReference type="PROSITE" id="PS50137">
    <property type="entry name" value="DS_RBD"/>
    <property type="match status" value="1"/>
</dbReference>
<dbReference type="PROSITE" id="PS00517">
    <property type="entry name" value="RNASE_3_1"/>
    <property type="match status" value="1"/>
</dbReference>
<dbReference type="PROSITE" id="PS50142">
    <property type="entry name" value="RNASE_3_2"/>
    <property type="match status" value="1"/>
</dbReference>
<keyword id="KW-0963">Cytoplasm</keyword>
<keyword id="KW-0255">Endonuclease</keyword>
<keyword id="KW-0378">Hydrolase</keyword>
<keyword id="KW-0460">Magnesium</keyword>
<keyword id="KW-0479">Metal-binding</keyword>
<keyword id="KW-0507">mRNA processing</keyword>
<keyword id="KW-0540">Nuclease</keyword>
<keyword id="KW-0694">RNA-binding</keyword>
<keyword id="KW-0698">rRNA processing</keyword>
<keyword id="KW-0699">rRNA-binding</keyword>
<keyword id="KW-0819">tRNA processing</keyword>
<name>RNC_YERPS</name>
<reference key="1">
    <citation type="journal article" date="2004" name="Proc. Natl. Acad. Sci. U.S.A.">
        <title>Insights into the evolution of Yersinia pestis through whole-genome comparison with Yersinia pseudotuberculosis.</title>
        <authorList>
            <person name="Chain P.S.G."/>
            <person name="Carniel E."/>
            <person name="Larimer F.W."/>
            <person name="Lamerdin J."/>
            <person name="Stoutland P.O."/>
            <person name="Regala W.M."/>
            <person name="Georgescu A.M."/>
            <person name="Vergez L.M."/>
            <person name="Land M.L."/>
            <person name="Motin V.L."/>
            <person name="Brubaker R.R."/>
            <person name="Fowler J."/>
            <person name="Hinnebusch J."/>
            <person name="Marceau M."/>
            <person name="Medigue C."/>
            <person name="Simonet M."/>
            <person name="Chenal-Francisque V."/>
            <person name="Souza B."/>
            <person name="Dacheux D."/>
            <person name="Elliott J.M."/>
            <person name="Derbise A."/>
            <person name="Hauser L.J."/>
            <person name="Garcia E."/>
        </authorList>
    </citation>
    <scope>NUCLEOTIDE SEQUENCE [LARGE SCALE GENOMIC DNA]</scope>
    <source>
        <strain>IP32953</strain>
    </source>
</reference>
<organism>
    <name type="scientific">Yersinia pseudotuberculosis serotype I (strain IP32953)</name>
    <dbReference type="NCBI Taxonomy" id="273123"/>
    <lineage>
        <taxon>Bacteria</taxon>
        <taxon>Pseudomonadati</taxon>
        <taxon>Pseudomonadota</taxon>
        <taxon>Gammaproteobacteria</taxon>
        <taxon>Enterobacterales</taxon>
        <taxon>Yersiniaceae</taxon>
        <taxon>Yersinia</taxon>
    </lineage>
</organism>
<sequence length="226" mass="25707">MNPIVINRLQRKLGYTFQQQELLLQALTHRSASSKHNERLEFLGDSILSFVIANELYRRFPRVDEGDMSRMRATLVRGNTLAEMAREFDLGECLRLGPGELKSGGFRRESILADTVEALIGGVFLDSDIHTIERLILEWYHSRLEEISPGDKQKDPKTRLQEYLQGRHLPLPSYLVVQVRGEAHDQEFTIHCQVSGLNEPVIGTGSSRRKAEQAAAEQALKQLELE</sequence>
<comment type="function">
    <text evidence="1">Digests double-stranded RNA. Involved in the processing of primary rRNA transcript to yield the immediate precursors to the large and small rRNAs (23S and 16S). Processes some mRNAs, and tRNAs when they are encoded in the rRNA operon. Processes pre-crRNA and tracrRNA of type II CRISPR loci if present in the organism.</text>
</comment>
<comment type="catalytic activity">
    <reaction evidence="1">
        <text>Endonucleolytic cleavage to 5'-phosphomonoester.</text>
        <dbReference type="EC" id="3.1.26.3"/>
    </reaction>
</comment>
<comment type="cofactor">
    <cofactor evidence="1">
        <name>Mg(2+)</name>
        <dbReference type="ChEBI" id="CHEBI:18420"/>
    </cofactor>
</comment>
<comment type="subunit">
    <text evidence="1">Homodimer.</text>
</comment>
<comment type="subcellular location">
    <subcellularLocation>
        <location evidence="1">Cytoplasm</location>
    </subcellularLocation>
</comment>
<comment type="similarity">
    <text evidence="1">Belongs to the ribonuclease III family.</text>
</comment>
<proteinExistence type="inferred from homology"/>
<feature type="chain" id="PRO_0000180462" description="Ribonuclease 3">
    <location>
        <begin position="1"/>
        <end position="226"/>
    </location>
</feature>
<feature type="domain" description="RNase III" evidence="1">
    <location>
        <begin position="6"/>
        <end position="128"/>
    </location>
</feature>
<feature type="domain" description="DRBM" evidence="1">
    <location>
        <begin position="155"/>
        <end position="225"/>
    </location>
</feature>
<feature type="active site" evidence="1">
    <location>
        <position position="45"/>
    </location>
</feature>
<feature type="active site" evidence="1">
    <location>
        <position position="117"/>
    </location>
</feature>
<feature type="binding site" evidence="1">
    <location>
        <position position="41"/>
    </location>
    <ligand>
        <name>Mg(2+)</name>
        <dbReference type="ChEBI" id="CHEBI:18420"/>
    </ligand>
</feature>
<feature type="binding site" evidence="1">
    <location>
        <position position="114"/>
    </location>
    <ligand>
        <name>Mg(2+)</name>
        <dbReference type="ChEBI" id="CHEBI:18420"/>
    </ligand>
</feature>
<feature type="binding site" evidence="1">
    <location>
        <position position="117"/>
    </location>
    <ligand>
        <name>Mg(2+)</name>
        <dbReference type="ChEBI" id="CHEBI:18420"/>
    </ligand>
</feature>
<protein>
    <recommendedName>
        <fullName evidence="1">Ribonuclease 3</fullName>
        <ecNumber evidence="1">3.1.26.3</ecNumber>
    </recommendedName>
    <alternativeName>
        <fullName evidence="1">Ribonuclease III</fullName>
        <shortName evidence="1">RNase III</shortName>
    </alternativeName>
</protein>
<gene>
    <name evidence="1" type="primary">rnc</name>
    <name type="ordered locus">YPTB2890</name>
</gene>
<accession>Q667V1</accession>
<evidence type="ECO:0000255" key="1">
    <source>
        <dbReference type="HAMAP-Rule" id="MF_00104"/>
    </source>
</evidence>